<feature type="chain" id="PRO_1000140132" description="Shikimate kinase 2">
    <location>
        <begin position="1"/>
        <end position="174"/>
    </location>
</feature>
<feature type="region of interest" description="LID domain">
    <location>
        <begin position="112"/>
        <end position="126"/>
    </location>
</feature>
<feature type="binding site" evidence="1">
    <location>
        <begin position="12"/>
        <end position="17"/>
    </location>
    <ligand>
        <name>ATP</name>
        <dbReference type="ChEBI" id="CHEBI:30616"/>
    </ligand>
</feature>
<feature type="binding site" evidence="1">
    <location>
        <position position="16"/>
    </location>
    <ligand>
        <name>Mg(2+)</name>
        <dbReference type="ChEBI" id="CHEBI:18420"/>
    </ligand>
</feature>
<feature type="binding site" evidence="1">
    <location>
        <position position="32"/>
    </location>
    <ligand>
        <name>Mg(2+)</name>
        <dbReference type="ChEBI" id="CHEBI:18420"/>
    </ligand>
</feature>
<feature type="binding site" evidence="1">
    <location>
        <position position="34"/>
    </location>
    <ligand>
        <name>substrate</name>
    </ligand>
</feature>
<feature type="binding site" evidence="1">
    <location>
        <position position="58"/>
    </location>
    <ligand>
        <name>substrate</name>
    </ligand>
</feature>
<feature type="binding site" evidence="1">
    <location>
        <position position="79"/>
    </location>
    <ligand>
        <name>substrate</name>
    </ligand>
</feature>
<feature type="binding site" evidence="1">
    <location>
        <position position="120"/>
    </location>
    <ligand>
        <name>ATP</name>
        <dbReference type="ChEBI" id="CHEBI:30616"/>
    </ligand>
</feature>
<feature type="binding site" evidence="1">
    <location>
        <position position="139"/>
    </location>
    <ligand>
        <name>substrate</name>
    </ligand>
</feature>
<protein>
    <recommendedName>
        <fullName evidence="1">Shikimate kinase 2</fullName>
        <shortName evidence="1">SK 2</shortName>
        <ecNumber evidence="1">2.7.1.71</ecNumber>
    </recommendedName>
</protein>
<evidence type="ECO:0000255" key="1">
    <source>
        <dbReference type="HAMAP-Rule" id="MF_01269"/>
    </source>
</evidence>
<organism>
    <name type="scientific">Escherichia coli O17:K52:H18 (strain UMN026 / ExPEC)</name>
    <dbReference type="NCBI Taxonomy" id="585056"/>
    <lineage>
        <taxon>Bacteria</taxon>
        <taxon>Pseudomonadati</taxon>
        <taxon>Pseudomonadota</taxon>
        <taxon>Gammaproteobacteria</taxon>
        <taxon>Enterobacterales</taxon>
        <taxon>Enterobacteriaceae</taxon>
        <taxon>Escherichia</taxon>
    </lineage>
</organism>
<keyword id="KW-0028">Amino-acid biosynthesis</keyword>
<keyword id="KW-0057">Aromatic amino acid biosynthesis</keyword>
<keyword id="KW-0067">ATP-binding</keyword>
<keyword id="KW-0963">Cytoplasm</keyword>
<keyword id="KW-0418">Kinase</keyword>
<keyword id="KW-0460">Magnesium</keyword>
<keyword id="KW-0479">Metal-binding</keyword>
<keyword id="KW-0547">Nucleotide-binding</keyword>
<keyword id="KW-0808">Transferase</keyword>
<name>AROL_ECOLU</name>
<dbReference type="EC" id="2.7.1.71" evidence="1"/>
<dbReference type="EMBL" id="CU928163">
    <property type="protein sequence ID" value="CAR11641.1"/>
    <property type="molecule type" value="Genomic_DNA"/>
</dbReference>
<dbReference type="RefSeq" id="WP_000193393.1">
    <property type="nucleotide sequence ID" value="NC_011751.1"/>
</dbReference>
<dbReference type="RefSeq" id="YP_002411189.1">
    <property type="nucleotide sequence ID" value="NC_011751.1"/>
</dbReference>
<dbReference type="SMR" id="B7N8U0"/>
<dbReference type="STRING" id="585056.ECUMN_0426"/>
<dbReference type="GeneID" id="93777073"/>
<dbReference type="KEGG" id="eum:ECUMN_0426"/>
<dbReference type="PATRIC" id="fig|585056.7.peg.625"/>
<dbReference type="HOGENOM" id="CLU_057607_4_3_6"/>
<dbReference type="UniPathway" id="UPA00053">
    <property type="reaction ID" value="UER00088"/>
</dbReference>
<dbReference type="Proteomes" id="UP000007097">
    <property type="component" value="Chromosome"/>
</dbReference>
<dbReference type="GO" id="GO:0005829">
    <property type="term" value="C:cytosol"/>
    <property type="evidence" value="ECO:0007669"/>
    <property type="project" value="TreeGrafter"/>
</dbReference>
<dbReference type="GO" id="GO:0005524">
    <property type="term" value="F:ATP binding"/>
    <property type="evidence" value="ECO:0007669"/>
    <property type="project" value="UniProtKB-UniRule"/>
</dbReference>
<dbReference type="GO" id="GO:0000287">
    <property type="term" value="F:magnesium ion binding"/>
    <property type="evidence" value="ECO:0007669"/>
    <property type="project" value="UniProtKB-UniRule"/>
</dbReference>
<dbReference type="GO" id="GO:0004765">
    <property type="term" value="F:shikimate kinase activity"/>
    <property type="evidence" value="ECO:0007669"/>
    <property type="project" value="UniProtKB-UniRule"/>
</dbReference>
<dbReference type="GO" id="GO:0008652">
    <property type="term" value="P:amino acid biosynthetic process"/>
    <property type="evidence" value="ECO:0007669"/>
    <property type="project" value="UniProtKB-KW"/>
</dbReference>
<dbReference type="GO" id="GO:0009073">
    <property type="term" value="P:aromatic amino acid family biosynthetic process"/>
    <property type="evidence" value="ECO:0007669"/>
    <property type="project" value="UniProtKB-KW"/>
</dbReference>
<dbReference type="GO" id="GO:0009423">
    <property type="term" value="P:chorismate biosynthetic process"/>
    <property type="evidence" value="ECO:0007669"/>
    <property type="project" value="UniProtKB-UniRule"/>
</dbReference>
<dbReference type="CDD" id="cd00464">
    <property type="entry name" value="SK"/>
    <property type="match status" value="1"/>
</dbReference>
<dbReference type="FunFam" id="3.40.50.300:FF:000408">
    <property type="entry name" value="Shikimate kinase 2"/>
    <property type="match status" value="1"/>
</dbReference>
<dbReference type="Gene3D" id="3.40.50.300">
    <property type="entry name" value="P-loop containing nucleotide triphosphate hydrolases"/>
    <property type="match status" value="1"/>
</dbReference>
<dbReference type="HAMAP" id="MF_00109">
    <property type="entry name" value="Shikimate_kinase"/>
    <property type="match status" value="1"/>
</dbReference>
<dbReference type="HAMAP" id="MF_01269">
    <property type="entry name" value="Shikimate_kinase_2"/>
    <property type="match status" value="1"/>
</dbReference>
<dbReference type="InterPro" id="IPR027417">
    <property type="entry name" value="P-loop_NTPase"/>
</dbReference>
<dbReference type="InterPro" id="IPR031322">
    <property type="entry name" value="Shikimate/glucono_kinase"/>
</dbReference>
<dbReference type="InterPro" id="IPR000623">
    <property type="entry name" value="Shikimate_kinase/TSH1"/>
</dbReference>
<dbReference type="InterPro" id="IPR027544">
    <property type="entry name" value="Shikimate_kinase_2"/>
</dbReference>
<dbReference type="InterPro" id="IPR023000">
    <property type="entry name" value="Shikimate_kinase_CS"/>
</dbReference>
<dbReference type="NCBIfam" id="NF002988">
    <property type="entry name" value="PRK03731.1"/>
    <property type="match status" value="1"/>
</dbReference>
<dbReference type="PANTHER" id="PTHR21087">
    <property type="entry name" value="SHIKIMATE KINASE"/>
    <property type="match status" value="1"/>
</dbReference>
<dbReference type="PANTHER" id="PTHR21087:SF21">
    <property type="entry name" value="SHIKIMATE KINASE 2"/>
    <property type="match status" value="1"/>
</dbReference>
<dbReference type="Pfam" id="PF01202">
    <property type="entry name" value="SKI"/>
    <property type="match status" value="1"/>
</dbReference>
<dbReference type="PRINTS" id="PR01100">
    <property type="entry name" value="SHIKIMTKNASE"/>
</dbReference>
<dbReference type="SUPFAM" id="SSF52540">
    <property type="entry name" value="P-loop containing nucleoside triphosphate hydrolases"/>
    <property type="match status" value="1"/>
</dbReference>
<dbReference type="PROSITE" id="PS01128">
    <property type="entry name" value="SHIKIMATE_KINASE"/>
    <property type="match status" value="1"/>
</dbReference>
<accession>B7N8U0</accession>
<comment type="function">
    <text evidence="1">Catalyzes the specific phosphorylation of the 3-hydroxyl group of shikimic acid using ATP as a cosubstrate.</text>
</comment>
<comment type="catalytic activity">
    <reaction evidence="1">
        <text>shikimate + ATP = 3-phosphoshikimate + ADP + H(+)</text>
        <dbReference type="Rhea" id="RHEA:13121"/>
        <dbReference type="ChEBI" id="CHEBI:15378"/>
        <dbReference type="ChEBI" id="CHEBI:30616"/>
        <dbReference type="ChEBI" id="CHEBI:36208"/>
        <dbReference type="ChEBI" id="CHEBI:145989"/>
        <dbReference type="ChEBI" id="CHEBI:456216"/>
        <dbReference type="EC" id="2.7.1.71"/>
    </reaction>
</comment>
<comment type="cofactor">
    <cofactor evidence="1">
        <name>Mg(2+)</name>
        <dbReference type="ChEBI" id="CHEBI:18420"/>
    </cofactor>
    <text evidence="1">Binds 1 Mg(2+) ion per subunit.</text>
</comment>
<comment type="pathway">
    <text evidence="1">Metabolic intermediate biosynthesis; chorismate biosynthesis; chorismate from D-erythrose 4-phosphate and phosphoenolpyruvate: step 5/7.</text>
</comment>
<comment type="subunit">
    <text evidence="1">Monomer.</text>
</comment>
<comment type="subcellular location">
    <subcellularLocation>
        <location evidence="1">Cytoplasm</location>
    </subcellularLocation>
</comment>
<comment type="domain">
    <text evidence="1">The LID domain closes over the active site upon ATP binding.</text>
</comment>
<comment type="similarity">
    <text evidence="1">Belongs to the shikimate kinase family. AroL subfamily.</text>
</comment>
<reference key="1">
    <citation type="journal article" date="2009" name="PLoS Genet.">
        <title>Organised genome dynamics in the Escherichia coli species results in highly diverse adaptive paths.</title>
        <authorList>
            <person name="Touchon M."/>
            <person name="Hoede C."/>
            <person name="Tenaillon O."/>
            <person name="Barbe V."/>
            <person name="Baeriswyl S."/>
            <person name="Bidet P."/>
            <person name="Bingen E."/>
            <person name="Bonacorsi S."/>
            <person name="Bouchier C."/>
            <person name="Bouvet O."/>
            <person name="Calteau A."/>
            <person name="Chiapello H."/>
            <person name="Clermont O."/>
            <person name="Cruveiller S."/>
            <person name="Danchin A."/>
            <person name="Diard M."/>
            <person name="Dossat C."/>
            <person name="Karoui M.E."/>
            <person name="Frapy E."/>
            <person name="Garry L."/>
            <person name="Ghigo J.M."/>
            <person name="Gilles A.M."/>
            <person name="Johnson J."/>
            <person name="Le Bouguenec C."/>
            <person name="Lescat M."/>
            <person name="Mangenot S."/>
            <person name="Martinez-Jehanne V."/>
            <person name="Matic I."/>
            <person name="Nassif X."/>
            <person name="Oztas S."/>
            <person name="Petit M.A."/>
            <person name="Pichon C."/>
            <person name="Rouy Z."/>
            <person name="Ruf C.S."/>
            <person name="Schneider D."/>
            <person name="Tourret J."/>
            <person name="Vacherie B."/>
            <person name="Vallenet D."/>
            <person name="Medigue C."/>
            <person name="Rocha E.P.C."/>
            <person name="Denamur E."/>
        </authorList>
    </citation>
    <scope>NUCLEOTIDE SEQUENCE [LARGE SCALE GENOMIC DNA]</scope>
    <source>
        <strain>UMN026 / ExPEC</strain>
    </source>
</reference>
<proteinExistence type="inferred from homology"/>
<gene>
    <name evidence="1" type="primary">aroL</name>
    <name type="ordered locus">ECUMN_0426</name>
</gene>
<sequence length="174" mass="19151">MTQPLFLIGPRGCGKTTVGMALADSLNRRFVDTDQWLQSQLNMTVAEIVEREEWAGFRARETAALEAVTAPSTVIATGGGIILTEFNRHFMQNNGIVVYLCAPVSVLVNRLQAAPEEDLRPTLTGKPLSEEVQEVLEERDALYREVAHIIIDATNEPSQVISEIRSALAQTINC</sequence>